<name>Y178_ALKPO</name>
<dbReference type="EMBL" id="M94110">
    <property type="protein sequence ID" value="AAA22369.1"/>
    <property type="molecule type" value="Genomic_DNA"/>
</dbReference>
<dbReference type="EMBL" id="CP001878">
    <property type="protein sequence ID" value="ADC48247.1"/>
    <property type="status" value="ALT_INIT"/>
    <property type="molecule type" value="Genomic_DNA"/>
</dbReference>
<dbReference type="SMR" id="Q04454"/>
<dbReference type="STRING" id="398511.BpOF4_00890"/>
<dbReference type="TCDB" id="2.A.86.1.3">
    <property type="family name" value="the autoinducer-2 exporter (ai-2e) family (formerly the perm family, tc #9,b,22)"/>
</dbReference>
<dbReference type="KEGG" id="bpf:BpOF4_00890"/>
<dbReference type="eggNOG" id="COG0628">
    <property type="taxonomic scope" value="Bacteria"/>
</dbReference>
<dbReference type="HOGENOM" id="CLU_031275_4_0_9"/>
<dbReference type="Proteomes" id="UP000001544">
    <property type="component" value="Chromosome"/>
</dbReference>
<dbReference type="GO" id="GO:0005886">
    <property type="term" value="C:plasma membrane"/>
    <property type="evidence" value="ECO:0007669"/>
    <property type="project" value="UniProtKB-SubCell"/>
</dbReference>
<dbReference type="GO" id="GO:0055085">
    <property type="term" value="P:transmembrane transport"/>
    <property type="evidence" value="ECO:0007669"/>
    <property type="project" value="TreeGrafter"/>
</dbReference>
<dbReference type="InterPro" id="IPR002549">
    <property type="entry name" value="AI-2E-like"/>
</dbReference>
<dbReference type="InterPro" id="IPR014227">
    <property type="entry name" value="YtvI-like"/>
</dbReference>
<dbReference type="NCBIfam" id="TIGR02872">
    <property type="entry name" value="spore_ytvI"/>
    <property type="match status" value="1"/>
</dbReference>
<dbReference type="PANTHER" id="PTHR21716">
    <property type="entry name" value="TRANSMEMBRANE PROTEIN"/>
    <property type="match status" value="1"/>
</dbReference>
<dbReference type="PANTHER" id="PTHR21716:SF68">
    <property type="entry name" value="TRANSPORT PROTEIN YTVI-RELATED"/>
    <property type="match status" value="1"/>
</dbReference>
<dbReference type="Pfam" id="PF01594">
    <property type="entry name" value="AI-2E_transport"/>
    <property type="match status" value="1"/>
</dbReference>
<keyword id="KW-1003">Cell membrane</keyword>
<keyword id="KW-0472">Membrane</keyword>
<keyword id="KW-1185">Reference proteome</keyword>
<keyword id="KW-0812">Transmembrane</keyword>
<keyword id="KW-1133">Transmembrane helix</keyword>
<keyword id="KW-0813">Transport</keyword>
<protein>
    <recommendedName>
        <fullName>Putative transport protein BpOF4_00890</fullName>
    </recommendedName>
    <alternativeName>
        <fullName>ORF2</fullName>
    </alternativeName>
</protein>
<feature type="chain" id="PRO_0000148305" description="Putative transport protein BpOF4_00890">
    <location>
        <begin position="1"/>
        <end position="385"/>
    </location>
</feature>
<feature type="transmembrane region" description="Helical" evidence="1">
    <location>
        <begin position="42"/>
        <end position="62"/>
    </location>
</feature>
<feature type="transmembrane region" description="Helical" evidence="1">
    <location>
        <begin position="63"/>
        <end position="83"/>
    </location>
</feature>
<feature type="transmembrane region" description="Helical" evidence="1">
    <location>
        <begin position="93"/>
        <end position="113"/>
    </location>
</feature>
<feature type="transmembrane region" description="Helical" evidence="1">
    <location>
        <begin position="191"/>
        <end position="211"/>
    </location>
</feature>
<feature type="transmembrane region" description="Helical" evidence="1">
    <location>
        <begin position="255"/>
        <end position="275"/>
    </location>
</feature>
<feature type="transmembrane region" description="Helical" evidence="1">
    <location>
        <begin position="276"/>
        <end position="296"/>
    </location>
</feature>
<feature type="transmembrane region" description="Helical" evidence="1">
    <location>
        <begin position="304"/>
        <end position="324"/>
    </location>
</feature>
<feature type="transmembrane region" description="Helical" evidence="1">
    <location>
        <begin position="350"/>
        <end position="370"/>
    </location>
</feature>
<feature type="sequence conflict" description="In Ref. 1; AAA22369." evidence="2" ref="1">
    <original>S</original>
    <variation>R</variation>
    <location>
        <position position="177"/>
    </location>
</feature>
<organism>
    <name type="scientific">Alkalihalophilus pseudofirmus (strain ATCC BAA-2126 / JCM 17055 / OF4)</name>
    <name type="common">Bacillus pseudofirmus</name>
    <dbReference type="NCBI Taxonomy" id="398511"/>
    <lineage>
        <taxon>Bacteria</taxon>
        <taxon>Bacillati</taxon>
        <taxon>Bacillota</taxon>
        <taxon>Bacilli</taxon>
        <taxon>Bacillales</taxon>
        <taxon>Bacillaceae</taxon>
        <taxon>Alkalihalophilus</taxon>
    </lineage>
</organism>
<evidence type="ECO:0000255" key="1"/>
<evidence type="ECO:0000305" key="2"/>
<gene>
    <name type="ordered locus">BpOF4_00890</name>
</gene>
<accession>Q04454</accession>
<accession>D3FU45</accession>
<sequence length="385" mass="43341">MNKVNKINAYTCSSFQLHTIMKISFYVVERGFELAAFFTRRTIWIIISILLFLVAAYFILPVSLPLVAALLTALILTPAVNALQRKTKIKRNVAVMLVFTVFVVFIGLSGYYIATKAITQGTQIVENSPQYISDINRAWLNFQRNLEEKYENLPPELVQEINITVTNTLSDLRSNISDRNLIQDITSLISSIPGYLVTFLVYLIALFLFMLELPRLREKLYSYLSERTKEKVNFMTSRLSYVIWGFFKAQFLVSIIIFIVTLIGLLFIAPEVALLMAFIIWLIDFVPIIGSIVILAPWAIFQLIVGDVSTGSKLLILAAVLLIIRRTVEPKVMGKHIGLSPLATLIAMYLGLMLFGVIGFIIGPLLVIAFTSAKEAGIIKLNFKL</sequence>
<proteinExistence type="inferred from homology"/>
<comment type="subcellular location">
    <subcellularLocation>
        <location evidence="2">Cell membrane</location>
        <topology evidence="2">Multi-pass membrane protein</topology>
    </subcellularLocation>
</comment>
<comment type="similarity">
    <text evidence="2">Belongs to the autoinducer-2 exporter (AI-2E) (TC 2.A.86) family.</text>
</comment>
<comment type="sequence caution" evidence="2">
    <conflict type="erroneous initiation">
        <sequence resource="EMBL-CDS" id="ADC48247"/>
    </conflict>
    <text>Truncated N-terminus.</text>
</comment>
<reference key="1">
    <citation type="journal article" date="1993" name="J. Biol. Chem.">
        <title>Cloning of the cta operon from alkaliphilic Bacillus firmus OF4 and characterization of the pH-regulated cytochrome caa3 oxidase it encodes.</title>
        <authorList>
            <person name="Quirk P.G."/>
            <person name="Hicks D.B."/>
            <person name="Krulwich T.A."/>
        </authorList>
    </citation>
    <scope>NUCLEOTIDE SEQUENCE [GENOMIC DNA]</scope>
</reference>
<reference key="2">
    <citation type="journal article" date="2011" name="Environ. Microbiol.">
        <title>Genome of alkaliphilic Bacillus pseudofirmus OF4 reveals adaptations that support the ability to grow in an external pH range from 7.5 to 11.4.</title>
        <authorList>
            <person name="Janto B."/>
            <person name="Ahmed A."/>
            <person name="Ito M."/>
            <person name="Liu J."/>
            <person name="Hicks D.B."/>
            <person name="Pagni S."/>
            <person name="Fackelmayer O.J."/>
            <person name="Smith T.A."/>
            <person name="Earl J."/>
            <person name="Elbourne L.D."/>
            <person name="Hassan K."/>
            <person name="Paulsen I.T."/>
            <person name="Kolsto A.B."/>
            <person name="Tourasse N.J."/>
            <person name="Ehrlich G.D."/>
            <person name="Boissy R."/>
            <person name="Ivey D.M."/>
            <person name="Li G."/>
            <person name="Xue Y."/>
            <person name="Ma Y."/>
            <person name="Hu F.Z."/>
            <person name="Krulwich T.A."/>
        </authorList>
    </citation>
    <scope>NUCLEOTIDE SEQUENCE [LARGE SCALE GENOMIC DNA]</scope>
    <source>
        <strain>ATCC BAA-2126 / JCM 17055 / OF4</strain>
    </source>
</reference>